<gene>
    <name evidence="1" type="primary">fliT</name>
    <name type="ordered locus">EcHS_A2026</name>
</gene>
<evidence type="ECO:0000255" key="1">
    <source>
        <dbReference type="HAMAP-Rule" id="MF_01180"/>
    </source>
</evidence>
<accession>A8A1C8</accession>
<proteinExistence type="inferred from homology"/>
<sequence length="121" mass="13762">MNNAPHLYFAWQQLVEKSQLMLRLATEEQWDELIASEMAYVNAVQEIAHLTEEVAPSTTMQEQLRPMLRLILDNESKVKQLLQIRMDELAKLVGQSSVQKSVLSAYGDQGGFVLAPQDNLF</sequence>
<reference key="1">
    <citation type="journal article" date="2008" name="J. Bacteriol.">
        <title>The pangenome structure of Escherichia coli: comparative genomic analysis of E. coli commensal and pathogenic isolates.</title>
        <authorList>
            <person name="Rasko D.A."/>
            <person name="Rosovitz M.J."/>
            <person name="Myers G.S.A."/>
            <person name="Mongodin E.F."/>
            <person name="Fricke W.F."/>
            <person name="Gajer P."/>
            <person name="Crabtree J."/>
            <person name="Sebaihia M."/>
            <person name="Thomson N.R."/>
            <person name="Chaudhuri R."/>
            <person name="Henderson I.R."/>
            <person name="Sperandio V."/>
            <person name="Ravel J."/>
        </authorList>
    </citation>
    <scope>NUCLEOTIDE SEQUENCE [LARGE SCALE GENOMIC DNA]</scope>
    <source>
        <strain>HS</strain>
    </source>
</reference>
<name>FLIT_ECOHS</name>
<dbReference type="EMBL" id="CP000802">
    <property type="protein sequence ID" value="ABV06332.1"/>
    <property type="molecule type" value="Genomic_DNA"/>
</dbReference>
<dbReference type="RefSeq" id="WP_001057840.1">
    <property type="nucleotide sequence ID" value="NC_009800.1"/>
</dbReference>
<dbReference type="SMR" id="A8A1C8"/>
<dbReference type="KEGG" id="ecx:EcHS_A2026"/>
<dbReference type="HOGENOM" id="CLU_155793_1_1_6"/>
<dbReference type="GO" id="GO:0005829">
    <property type="term" value="C:cytosol"/>
    <property type="evidence" value="ECO:0007669"/>
    <property type="project" value="UniProtKB-SubCell"/>
</dbReference>
<dbReference type="GO" id="GO:0044781">
    <property type="term" value="P:bacterial-type flagellum organization"/>
    <property type="evidence" value="ECO:0007669"/>
    <property type="project" value="UniProtKB-KW"/>
</dbReference>
<dbReference type="GO" id="GO:1902209">
    <property type="term" value="P:negative regulation of bacterial-type flagellum assembly"/>
    <property type="evidence" value="ECO:0007669"/>
    <property type="project" value="UniProtKB-UniRule"/>
</dbReference>
<dbReference type="GO" id="GO:0006457">
    <property type="term" value="P:protein folding"/>
    <property type="evidence" value="ECO:0007669"/>
    <property type="project" value="UniProtKB-UniRule"/>
</dbReference>
<dbReference type="FunFam" id="1.20.58.380:FF:000001">
    <property type="entry name" value="Flagellar protein FliT"/>
    <property type="match status" value="1"/>
</dbReference>
<dbReference type="Gene3D" id="1.20.58.380">
    <property type="entry name" value="Flagellar protein flit"/>
    <property type="match status" value="1"/>
</dbReference>
<dbReference type="HAMAP" id="MF_01180">
    <property type="entry name" value="FliT"/>
    <property type="match status" value="1"/>
</dbReference>
<dbReference type="InterPro" id="IPR008622">
    <property type="entry name" value="FliT"/>
</dbReference>
<dbReference type="NCBIfam" id="NF007836">
    <property type="entry name" value="PRK10548.1"/>
    <property type="match status" value="1"/>
</dbReference>
<dbReference type="Pfam" id="PF05400">
    <property type="entry name" value="FliT"/>
    <property type="match status" value="1"/>
</dbReference>
<keyword id="KW-1005">Bacterial flagellum biogenesis</keyword>
<keyword id="KW-0143">Chaperone</keyword>
<keyword id="KW-0963">Cytoplasm</keyword>
<keyword id="KW-0678">Repressor</keyword>
<keyword id="KW-0804">Transcription</keyword>
<keyword id="KW-0805">Transcription regulation</keyword>
<organism>
    <name type="scientific">Escherichia coli O9:H4 (strain HS)</name>
    <dbReference type="NCBI Taxonomy" id="331112"/>
    <lineage>
        <taxon>Bacteria</taxon>
        <taxon>Pseudomonadati</taxon>
        <taxon>Pseudomonadota</taxon>
        <taxon>Gammaproteobacteria</taxon>
        <taxon>Enterobacterales</taxon>
        <taxon>Enterobacteriaceae</taxon>
        <taxon>Escherichia</taxon>
    </lineage>
</organism>
<comment type="function">
    <text evidence="1">Dual-function protein that regulates the transcription of class 2 flagellar operons and that also acts as an export chaperone for the filament-capping protein FliD. As a transcriptional regulator, acts as an anti-FlhDC factor; it directly binds FlhC, thus inhibiting the binding of the FlhC/FlhD complex to class 2 promoters, resulting in decreased expression of class 2 flagellar operons. As a chaperone, effects FliD transition to the membrane by preventing its premature polymerization, and by directing it to the export apparatus.</text>
</comment>
<comment type="subunit">
    <text evidence="1">Homodimer. Interacts with FliD and FlhC.</text>
</comment>
<comment type="subcellular location">
    <subcellularLocation>
        <location evidence="1">Cytoplasm</location>
        <location evidence="1">Cytosol</location>
    </subcellularLocation>
</comment>
<comment type="similarity">
    <text evidence="1">Belongs to the FliT family.</text>
</comment>
<protein>
    <recommendedName>
        <fullName evidence="1">Flagellar protein FliT</fullName>
    </recommendedName>
</protein>
<feature type="chain" id="PRO_0000353885" description="Flagellar protein FliT">
    <location>
        <begin position="1"/>
        <end position="121"/>
    </location>
</feature>
<feature type="region of interest" description="Required for homodimerization" evidence="1">
    <location>
        <begin position="1"/>
        <end position="50"/>
    </location>
</feature>
<feature type="region of interest" description="FliD binding" evidence="1">
    <location>
        <begin position="60"/>
        <end position="98"/>
    </location>
</feature>